<accession>B2AG45</accession>
<gene>
    <name evidence="1" type="primary">pcp</name>
    <name type="ordered locus">RALTA_A0071</name>
</gene>
<evidence type="ECO:0000255" key="1">
    <source>
        <dbReference type="HAMAP-Rule" id="MF_00417"/>
    </source>
</evidence>
<name>PCP_CUPTR</name>
<feature type="chain" id="PRO_1000123994" description="Pyrrolidone-carboxylate peptidase">
    <location>
        <begin position="1"/>
        <end position="216"/>
    </location>
</feature>
<feature type="active site" evidence="1">
    <location>
        <position position="80"/>
    </location>
</feature>
<feature type="active site" evidence="1">
    <location>
        <position position="143"/>
    </location>
</feature>
<feature type="active site" evidence="1">
    <location>
        <position position="168"/>
    </location>
</feature>
<dbReference type="EC" id="3.4.19.3" evidence="1"/>
<dbReference type="EMBL" id="CU633749">
    <property type="protein sequence ID" value="CAP62744.1"/>
    <property type="molecule type" value="Genomic_DNA"/>
</dbReference>
<dbReference type="RefSeq" id="WP_012351413.1">
    <property type="nucleotide sequence ID" value="NC_010528.1"/>
</dbReference>
<dbReference type="SMR" id="B2AG45"/>
<dbReference type="MEROPS" id="C15.001"/>
<dbReference type="GeneID" id="29760517"/>
<dbReference type="KEGG" id="cti:RALTA_A0071"/>
<dbReference type="eggNOG" id="COG2039">
    <property type="taxonomic scope" value="Bacteria"/>
</dbReference>
<dbReference type="HOGENOM" id="CLU_043960_4_0_4"/>
<dbReference type="BioCyc" id="CTAI977880:RALTA_RS00355-MONOMER"/>
<dbReference type="Proteomes" id="UP000001692">
    <property type="component" value="Chromosome 1"/>
</dbReference>
<dbReference type="GO" id="GO:0005829">
    <property type="term" value="C:cytosol"/>
    <property type="evidence" value="ECO:0007669"/>
    <property type="project" value="InterPro"/>
</dbReference>
<dbReference type="GO" id="GO:0016920">
    <property type="term" value="F:pyroglutamyl-peptidase activity"/>
    <property type="evidence" value="ECO:0007669"/>
    <property type="project" value="UniProtKB-UniRule"/>
</dbReference>
<dbReference type="GO" id="GO:0006508">
    <property type="term" value="P:proteolysis"/>
    <property type="evidence" value="ECO:0007669"/>
    <property type="project" value="UniProtKB-KW"/>
</dbReference>
<dbReference type="CDD" id="cd00501">
    <property type="entry name" value="Peptidase_C15"/>
    <property type="match status" value="1"/>
</dbReference>
<dbReference type="FunFam" id="3.40.630.20:FF:000001">
    <property type="entry name" value="Pyrrolidone-carboxylate peptidase"/>
    <property type="match status" value="1"/>
</dbReference>
<dbReference type="Gene3D" id="3.40.630.20">
    <property type="entry name" value="Peptidase C15, pyroglutamyl peptidase I-like"/>
    <property type="match status" value="1"/>
</dbReference>
<dbReference type="HAMAP" id="MF_00417">
    <property type="entry name" value="Pyrrolid_peptidase"/>
    <property type="match status" value="1"/>
</dbReference>
<dbReference type="InterPro" id="IPR000816">
    <property type="entry name" value="Peptidase_C15"/>
</dbReference>
<dbReference type="InterPro" id="IPR016125">
    <property type="entry name" value="Peptidase_C15-like"/>
</dbReference>
<dbReference type="InterPro" id="IPR036440">
    <property type="entry name" value="Peptidase_C15-like_sf"/>
</dbReference>
<dbReference type="InterPro" id="IPR029762">
    <property type="entry name" value="PGP-I_bact-type"/>
</dbReference>
<dbReference type="InterPro" id="IPR033694">
    <property type="entry name" value="PGPEP1_Cys_AS"/>
</dbReference>
<dbReference type="NCBIfam" id="NF009676">
    <property type="entry name" value="PRK13197.1"/>
    <property type="match status" value="1"/>
</dbReference>
<dbReference type="NCBIfam" id="TIGR00504">
    <property type="entry name" value="pyro_pdase"/>
    <property type="match status" value="1"/>
</dbReference>
<dbReference type="PANTHER" id="PTHR23402">
    <property type="entry name" value="PROTEASE FAMILY C15 PYROGLUTAMYL-PEPTIDASE I-RELATED"/>
    <property type="match status" value="1"/>
</dbReference>
<dbReference type="PANTHER" id="PTHR23402:SF1">
    <property type="entry name" value="PYROGLUTAMYL-PEPTIDASE I"/>
    <property type="match status" value="1"/>
</dbReference>
<dbReference type="Pfam" id="PF01470">
    <property type="entry name" value="Peptidase_C15"/>
    <property type="match status" value="1"/>
</dbReference>
<dbReference type="PIRSF" id="PIRSF015592">
    <property type="entry name" value="Prld-crbxl_pptds"/>
    <property type="match status" value="1"/>
</dbReference>
<dbReference type="PRINTS" id="PR00706">
    <property type="entry name" value="PYROGLUPTASE"/>
</dbReference>
<dbReference type="SUPFAM" id="SSF53182">
    <property type="entry name" value="Pyrrolidone carboxyl peptidase (pyroglutamate aminopeptidase)"/>
    <property type="match status" value="1"/>
</dbReference>
<dbReference type="PROSITE" id="PS01334">
    <property type="entry name" value="PYRASE_CYS"/>
    <property type="match status" value="1"/>
</dbReference>
<sequence>MPTVLLTGFEPFEDEPINPSWEAVRALDGERVGDAVIVARQLPCVFGAAIDAIGELLDTLRPALVIAVGQAGGRAEMSVERVAINVDDARIADNAGAQPIDTAIVADGPAAYFATLPIKAMVRDMRAAGVPASVSQTAGTFVCNHVFYGLMHRLARHPAGTVRGGFIHIPYLPEQAARHPGQPSLALETLVKGLRTAVATALSTRADVREQGGQLH</sequence>
<comment type="function">
    <text evidence="1">Removes 5-oxoproline from various penultimate amino acid residues except L-proline.</text>
</comment>
<comment type="catalytic activity">
    <reaction evidence="1">
        <text>Release of an N-terminal pyroglutamyl group from a polypeptide, the second amino acid generally not being Pro.</text>
        <dbReference type="EC" id="3.4.19.3"/>
    </reaction>
</comment>
<comment type="subunit">
    <text evidence="1">Homotetramer.</text>
</comment>
<comment type="subcellular location">
    <subcellularLocation>
        <location evidence="1">Cytoplasm</location>
    </subcellularLocation>
</comment>
<comment type="similarity">
    <text evidence="1">Belongs to the peptidase C15 family.</text>
</comment>
<reference key="1">
    <citation type="journal article" date="2008" name="Genome Res.">
        <title>Genome sequence of the beta-rhizobium Cupriavidus taiwanensis and comparative genomics of rhizobia.</title>
        <authorList>
            <person name="Amadou C."/>
            <person name="Pascal G."/>
            <person name="Mangenot S."/>
            <person name="Glew M."/>
            <person name="Bontemps C."/>
            <person name="Capela D."/>
            <person name="Carrere S."/>
            <person name="Cruveiller S."/>
            <person name="Dossat C."/>
            <person name="Lajus A."/>
            <person name="Marchetti M."/>
            <person name="Poinsot V."/>
            <person name="Rouy Z."/>
            <person name="Servin B."/>
            <person name="Saad M."/>
            <person name="Schenowitz C."/>
            <person name="Barbe V."/>
            <person name="Batut J."/>
            <person name="Medigue C."/>
            <person name="Masson-Boivin C."/>
        </authorList>
    </citation>
    <scope>NUCLEOTIDE SEQUENCE [LARGE SCALE GENOMIC DNA]</scope>
    <source>
        <strain>DSM 17343 / BCRC 17206 / CCUG 44338 / CIP 107171 / LMG 19424 / R1</strain>
    </source>
</reference>
<proteinExistence type="inferred from homology"/>
<protein>
    <recommendedName>
        <fullName evidence="1">Pyrrolidone-carboxylate peptidase</fullName>
        <ecNumber evidence="1">3.4.19.3</ecNumber>
    </recommendedName>
    <alternativeName>
        <fullName evidence="1">5-oxoprolyl-peptidase</fullName>
    </alternativeName>
    <alternativeName>
        <fullName evidence="1">Pyroglutamyl-peptidase I</fullName>
        <shortName evidence="1">PGP-I</shortName>
        <shortName evidence="1">Pyrase</shortName>
    </alternativeName>
</protein>
<organism>
    <name type="scientific">Cupriavidus taiwanensis (strain DSM 17343 / BCRC 17206 / CCUG 44338 / CIP 107171 / LMG 19424 / R1)</name>
    <name type="common">Ralstonia taiwanensis (strain LMG 19424)</name>
    <dbReference type="NCBI Taxonomy" id="977880"/>
    <lineage>
        <taxon>Bacteria</taxon>
        <taxon>Pseudomonadati</taxon>
        <taxon>Pseudomonadota</taxon>
        <taxon>Betaproteobacteria</taxon>
        <taxon>Burkholderiales</taxon>
        <taxon>Burkholderiaceae</taxon>
        <taxon>Cupriavidus</taxon>
    </lineage>
</organism>
<keyword id="KW-0963">Cytoplasm</keyword>
<keyword id="KW-0378">Hydrolase</keyword>
<keyword id="KW-0645">Protease</keyword>
<keyword id="KW-0788">Thiol protease</keyword>